<gene>
    <name evidence="1" type="primary">rpsB</name>
    <name evidence="1" type="synonym">rps2</name>
    <name type="ordered locus">PMT9312_0761</name>
</gene>
<protein>
    <recommendedName>
        <fullName evidence="1">Small ribosomal subunit protein uS2</fullName>
    </recommendedName>
    <alternativeName>
        <fullName evidence="2">30S ribosomal protein S2</fullName>
    </alternativeName>
</protein>
<keyword id="KW-0687">Ribonucleoprotein</keyword>
<keyword id="KW-0689">Ribosomal protein</keyword>
<sequence>MAVVSLSEMMEAGAHFGHQTRRWNPKMSKYIYCARNGVHIIDLVKTALCMNNAYKWTRNAAKGGKRFLFVGTKKQASDVVAQEATRCGAAYVNQRWLGGMLTNWTTMKARIERLKDLERMESSGSIAMRPKKEAAVLRRELERLQKYLGGLKGMRRLPDVVVLVDQRRETNAVLEARKLDISLVSMLDTNCDPDLCEVPIPCNDDAVRSVQLILGRLADAINEGRKASNNEKN</sequence>
<dbReference type="EMBL" id="CP000111">
    <property type="protein sequence ID" value="ABB49821.1"/>
    <property type="molecule type" value="Genomic_DNA"/>
</dbReference>
<dbReference type="RefSeq" id="WP_011376316.1">
    <property type="nucleotide sequence ID" value="NC_007577.1"/>
</dbReference>
<dbReference type="SMR" id="Q31BC4"/>
<dbReference type="STRING" id="74546.PMT9312_0761"/>
<dbReference type="KEGG" id="pmi:PMT9312_0761"/>
<dbReference type="eggNOG" id="COG0052">
    <property type="taxonomic scope" value="Bacteria"/>
</dbReference>
<dbReference type="HOGENOM" id="CLU_040318_1_2_3"/>
<dbReference type="OrthoDB" id="9808036at2"/>
<dbReference type="Proteomes" id="UP000002715">
    <property type="component" value="Chromosome"/>
</dbReference>
<dbReference type="GO" id="GO:0022627">
    <property type="term" value="C:cytosolic small ribosomal subunit"/>
    <property type="evidence" value="ECO:0007669"/>
    <property type="project" value="TreeGrafter"/>
</dbReference>
<dbReference type="GO" id="GO:0003735">
    <property type="term" value="F:structural constituent of ribosome"/>
    <property type="evidence" value="ECO:0007669"/>
    <property type="project" value="InterPro"/>
</dbReference>
<dbReference type="GO" id="GO:0006412">
    <property type="term" value="P:translation"/>
    <property type="evidence" value="ECO:0007669"/>
    <property type="project" value="UniProtKB-UniRule"/>
</dbReference>
<dbReference type="CDD" id="cd01425">
    <property type="entry name" value="RPS2"/>
    <property type="match status" value="1"/>
</dbReference>
<dbReference type="FunFam" id="1.10.287.610:FF:000001">
    <property type="entry name" value="30S ribosomal protein S2"/>
    <property type="match status" value="1"/>
</dbReference>
<dbReference type="Gene3D" id="3.40.50.10490">
    <property type="entry name" value="Glucose-6-phosphate isomerase like protein, domain 1"/>
    <property type="match status" value="1"/>
</dbReference>
<dbReference type="Gene3D" id="1.10.287.610">
    <property type="entry name" value="Helix hairpin bin"/>
    <property type="match status" value="1"/>
</dbReference>
<dbReference type="HAMAP" id="MF_00291_B">
    <property type="entry name" value="Ribosomal_uS2_B"/>
    <property type="match status" value="1"/>
</dbReference>
<dbReference type="InterPro" id="IPR001865">
    <property type="entry name" value="Ribosomal_uS2"/>
</dbReference>
<dbReference type="InterPro" id="IPR005706">
    <property type="entry name" value="Ribosomal_uS2_bac/mit/plastid"/>
</dbReference>
<dbReference type="InterPro" id="IPR018130">
    <property type="entry name" value="Ribosomal_uS2_CS"/>
</dbReference>
<dbReference type="InterPro" id="IPR023591">
    <property type="entry name" value="Ribosomal_uS2_flav_dom_sf"/>
</dbReference>
<dbReference type="NCBIfam" id="TIGR01011">
    <property type="entry name" value="rpsB_bact"/>
    <property type="match status" value="1"/>
</dbReference>
<dbReference type="PANTHER" id="PTHR12534">
    <property type="entry name" value="30S RIBOSOMAL PROTEIN S2 PROKARYOTIC AND ORGANELLAR"/>
    <property type="match status" value="1"/>
</dbReference>
<dbReference type="PANTHER" id="PTHR12534:SF0">
    <property type="entry name" value="SMALL RIBOSOMAL SUBUNIT PROTEIN US2M"/>
    <property type="match status" value="1"/>
</dbReference>
<dbReference type="Pfam" id="PF00318">
    <property type="entry name" value="Ribosomal_S2"/>
    <property type="match status" value="1"/>
</dbReference>
<dbReference type="PRINTS" id="PR00395">
    <property type="entry name" value="RIBOSOMALS2"/>
</dbReference>
<dbReference type="SUPFAM" id="SSF52313">
    <property type="entry name" value="Ribosomal protein S2"/>
    <property type="match status" value="1"/>
</dbReference>
<dbReference type="PROSITE" id="PS00962">
    <property type="entry name" value="RIBOSOMAL_S2_1"/>
    <property type="match status" value="1"/>
</dbReference>
<evidence type="ECO:0000255" key="1">
    <source>
        <dbReference type="HAMAP-Rule" id="MF_00291"/>
    </source>
</evidence>
<evidence type="ECO:0000305" key="2"/>
<name>RS2_PROM9</name>
<reference key="1">
    <citation type="journal article" date="2006" name="Science">
        <title>Genomic islands and the ecology and evolution of Prochlorococcus.</title>
        <authorList>
            <person name="Coleman M.L."/>
            <person name="Sullivan M.B."/>
            <person name="Martiny A.C."/>
            <person name="Steglich C."/>
            <person name="Barry K."/>
            <person name="Delong E.F."/>
            <person name="Chisholm S.W."/>
        </authorList>
    </citation>
    <scope>NUCLEOTIDE SEQUENCE [LARGE SCALE GENOMIC DNA]</scope>
    <source>
        <strain>MIT 9312</strain>
    </source>
</reference>
<organism>
    <name type="scientific">Prochlorococcus marinus (strain MIT 9312)</name>
    <dbReference type="NCBI Taxonomy" id="74546"/>
    <lineage>
        <taxon>Bacteria</taxon>
        <taxon>Bacillati</taxon>
        <taxon>Cyanobacteriota</taxon>
        <taxon>Cyanophyceae</taxon>
        <taxon>Synechococcales</taxon>
        <taxon>Prochlorococcaceae</taxon>
        <taxon>Prochlorococcus</taxon>
    </lineage>
</organism>
<accession>Q31BC4</accession>
<comment type="similarity">
    <text evidence="1">Belongs to the universal ribosomal protein uS2 family.</text>
</comment>
<proteinExistence type="inferred from homology"/>
<feature type="chain" id="PRO_1000004025" description="Small ribosomal subunit protein uS2">
    <location>
        <begin position="1"/>
        <end position="233"/>
    </location>
</feature>